<accession>A6TBS1</accession>
<feature type="chain" id="PRO_1000062309" description="UPF0352 protein KPN78578_25810">
    <location>
        <begin position="1"/>
        <end position="75"/>
    </location>
</feature>
<organism>
    <name type="scientific">Klebsiella pneumoniae subsp. pneumoniae (strain ATCC 700721 / MGH 78578)</name>
    <dbReference type="NCBI Taxonomy" id="272620"/>
    <lineage>
        <taxon>Bacteria</taxon>
        <taxon>Pseudomonadati</taxon>
        <taxon>Pseudomonadota</taxon>
        <taxon>Gammaproteobacteria</taxon>
        <taxon>Enterobacterales</taxon>
        <taxon>Enterobacteriaceae</taxon>
        <taxon>Klebsiella/Raoultella group</taxon>
        <taxon>Klebsiella</taxon>
        <taxon>Klebsiella pneumoniae complex</taxon>
    </lineage>
</organism>
<gene>
    <name type="ordered locus">KPN78578_25810</name>
    <name type="ORF">KPN_02624</name>
</gene>
<evidence type="ECO:0000255" key="1">
    <source>
        <dbReference type="HAMAP-Rule" id="MF_00816"/>
    </source>
</evidence>
<comment type="similarity">
    <text evidence="1">Belongs to the UPF0352 family.</text>
</comment>
<proteinExistence type="inferred from homology"/>
<reference key="1">
    <citation type="submission" date="2006-09" db="EMBL/GenBank/DDBJ databases">
        <authorList>
            <consortium name="The Klebsiella pneumonia Genome Sequencing Project"/>
            <person name="McClelland M."/>
            <person name="Sanderson E.K."/>
            <person name="Spieth J."/>
            <person name="Clifton W.S."/>
            <person name="Latreille P."/>
            <person name="Sabo A."/>
            <person name="Pepin K."/>
            <person name="Bhonagiri V."/>
            <person name="Porwollik S."/>
            <person name="Ali J."/>
            <person name="Wilson R.K."/>
        </authorList>
    </citation>
    <scope>NUCLEOTIDE SEQUENCE [LARGE SCALE GENOMIC DNA]</scope>
    <source>
        <strain>ATCC 700721 / MGH 78578</strain>
    </source>
</reference>
<sequence length="75" mass="8189">MPQISRYSDQQVEQLLSELTNVLESHKAPVDLSLMVLGNMVTNLINSSVAPAQRQAIARSFAQALQSSINDDPAH</sequence>
<name>Y2581_KLEP7</name>
<protein>
    <recommendedName>
        <fullName evidence="1">UPF0352 protein KPN78578_25810</fullName>
    </recommendedName>
</protein>
<dbReference type="EMBL" id="CP000647">
    <property type="protein sequence ID" value="ABR78042.1"/>
    <property type="molecule type" value="Genomic_DNA"/>
</dbReference>
<dbReference type="RefSeq" id="WP_004195346.1">
    <property type="nucleotide sequence ID" value="NC_009648.1"/>
</dbReference>
<dbReference type="SMR" id="A6TBS1"/>
<dbReference type="STRING" id="272620.KPN_02624"/>
<dbReference type="jPOST" id="A6TBS1"/>
<dbReference type="PaxDb" id="272620-KPN_02624"/>
<dbReference type="EnsemblBacteria" id="ABR78042">
    <property type="protein sequence ID" value="ABR78042"/>
    <property type="gene ID" value="KPN_02624"/>
</dbReference>
<dbReference type="KEGG" id="kpn:KPN_02624"/>
<dbReference type="HOGENOM" id="CLU_175457_0_0_6"/>
<dbReference type="Proteomes" id="UP000000265">
    <property type="component" value="Chromosome"/>
</dbReference>
<dbReference type="Gene3D" id="1.10.3390.10">
    <property type="entry name" value="YejL-like"/>
    <property type="match status" value="1"/>
</dbReference>
<dbReference type="HAMAP" id="MF_00816">
    <property type="entry name" value="UPF0352"/>
    <property type="match status" value="1"/>
</dbReference>
<dbReference type="InterPro" id="IPR009857">
    <property type="entry name" value="UPF0352"/>
</dbReference>
<dbReference type="InterPro" id="IPR023202">
    <property type="entry name" value="YejL_sf"/>
</dbReference>
<dbReference type="NCBIfam" id="NF010242">
    <property type="entry name" value="PRK13689.1"/>
    <property type="match status" value="1"/>
</dbReference>
<dbReference type="Pfam" id="PF07208">
    <property type="entry name" value="DUF1414"/>
    <property type="match status" value="1"/>
</dbReference>
<dbReference type="PIRSF" id="PIRSF006188">
    <property type="entry name" value="UCP006188"/>
    <property type="match status" value="1"/>
</dbReference>
<dbReference type="SUPFAM" id="SSF158651">
    <property type="entry name" value="YejL-like"/>
    <property type="match status" value="1"/>
</dbReference>